<accession>C4K0Q1</accession>
<organism>
    <name type="scientific">Rickettsia peacockii (strain Rustic)</name>
    <dbReference type="NCBI Taxonomy" id="562019"/>
    <lineage>
        <taxon>Bacteria</taxon>
        <taxon>Pseudomonadati</taxon>
        <taxon>Pseudomonadota</taxon>
        <taxon>Alphaproteobacteria</taxon>
        <taxon>Rickettsiales</taxon>
        <taxon>Rickettsiaceae</taxon>
        <taxon>Rickettsieae</taxon>
        <taxon>Rickettsia</taxon>
        <taxon>spotted fever group</taxon>
    </lineage>
</organism>
<sequence length="189" mass="21410">MSDKIFHNLSGKTLVATPHVITKGIYHKSLIYMLSHTEEGAIGLIFNRLVNHIDLKSFFKIKNDEITTPVMVPIYLGGPVEHEKGFFLHSSDYNKNLLLDFHNDLAVSSNLEISEDIAFGKGPKNSLFIIGYTAWKPGQLEEELETNLWLVMDCNKEFIFADNPESKWHNALKHLGIDEIHFSSQIGNA</sequence>
<gene>
    <name type="ordered locus">RPR_01165</name>
</gene>
<feature type="chain" id="PRO_1000212876" description="UPF0301 protein RPR_01165">
    <location>
        <begin position="1"/>
        <end position="189"/>
    </location>
</feature>
<evidence type="ECO:0000255" key="1">
    <source>
        <dbReference type="HAMAP-Rule" id="MF_00758"/>
    </source>
</evidence>
<proteinExistence type="inferred from homology"/>
<name>Y1165_RICPU</name>
<comment type="similarity">
    <text evidence="1">Belongs to the UPF0301 (AlgH) family.</text>
</comment>
<protein>
    <recommendedName>
        <fullName evidence="1">UPF0301 protein RPR_01165</fullName>
    </recommendedName>
</protein>
<reference key="1">
    <citation type="journal article" date="2009" name="PLoS ONE">
        <title>Genome sequence of the endosymbiont Rickettsia peacockii and comparison with virulent Rickettsia rickettsii: identification of virulence factors.</title>
        <authorList>
            <person name="Felsheim R.F."/>
            <person name="Kurtti T.J."/>
            <person name="Munderloh U.G."/>
        </authorList>
    </citation>
    <scope>NUCLEOTIDE SEQUENCE [LARGE SCALE GENOMIC DNA]</scope>
    <source>
        <strain>Rustic</strain>
    </source>
</reference>
<dbReference type="EMBL" id="CP001227">
    <property type="protein sequence ID" value="ACR47152.1"/>
    <property type="molecule type" value="Genomic_DNA"/>
</dbReference>
<dbReference type="RefSeq" id="WP_012736445.1">
    <property type="nucleotide sequence ID" value="NC_012730.1"/>
</dbReference>
<dbReference type="SMR" id="C4K0Q1"/>
<dbReference type="KEGG" id="rpk:RPR_01165"/>
<dbReference type="HOGENOM" id="CLU_057596_1_0_5"/>
<dbReference type="Proteomes" id="UP000005015">
    <property type="component" value="Chromosome"/>
</dbReference>
<dbReference type="GO" id="GO:0005829">
    <property type="term" value="C:cytosol"/>
    <property type="evidence" value="ECO:0007669"/>
    <property type="project" value="TreeGrafter"/>
</dbReference>
<dbReference type="Gene3D" id="3.40.1740.10">
    <property type="entry name" value="VC0467-like"/>
    <property type="match status" value="1"/>
</dbReference>
<dbReference type="HAMAP" id="MF_00758">
    <property type="entry name" value="UPF0301"/>
    <property type="match status" value="1"/>
</dbReference>
<dbReference type="InterPro" id="IPR003774">
    <property type="entry name" value="AlgH-like"/>
</dbReference>
<dbReference type="NCBIfam" id="NF001268">
    <property type="entry name" value="PRK00228.1-4"/>
    <property type="match status" value="1"/>
</dbReference>
<dbReference type="PANTHER" id="PTHR30327">
    <property type="entry name" value="UNCHARACTERIZED PROTEIN YQGE"/>
    <property type="match status" value="1"/>
</dbReference>
<dbReference type="PANTHER" id="PTHR30327:SF1">
    <property type="entry name" value="UPF0301 PROTEIN YQGE"/>
    <property type="match status" value="1"/>
</dbReference>
<dbReference type="Pfam" id="PF02622">
    <property type="entry name" value="DUF179"/>
    <property type="match status" value="1"/>
</dbReference>
<dbReference type="SUPFAM" id="SSF143456">
    <property type="entry name" value="VC0467-like"/>
    <property type="match status" value="1"/>
</dbReference>